<gene>
    <name evidence="1" type="primary">rpsZ</name>
    <name evidence="1" type="synonym">rpsN</name>
    <name type="ordered locus">BT9727_0119</name>
</gene>
<dbReference type="EMBL" id="AE017355">
    <property type="protein sequence ID" value="AAT63873.1"/>
    <property type="molecule type" value="Genomic_DNA"/>
</dbReference>
<dbReference type="RefSeq" id="WP_001085700.1">
    <property type="nucleotide sequence ID" value="NC_005957.1"/>
</dbReference>
<dbReference type="RefSeq" id="YP_034475.1">
    <property type="nucleotide sequence ID" value="NC_005957.1"/>
</dbReference>
<dbReference type="SMR" id="Q6HPP5"/>
<dbReference type="GeneID" id="93010930"/>
<dbReference type="KEGG" id="btk:BT9727_0119"/>
<dbReference type="PATRIC" id="fig|281309.8.peg.120"/>
<dbReference type="HOGENOM" id="CLU_139869_3_0_9"/>
<dbReference type="PRO" id="PR:Q6HPP5"/>
<dbReference type="Proteomes" id="UP000001301">
    <property type="component" value="Chromosome"/>
</dbReference>
<dbReference type="GO" id="GO:0015935">
    <property type="term" value="C:small ribosomal subunit"/>
    <property type="evidence" value="ECO:0007669"/>
    <property type="project" value="TreeGrafter"/>
</dbReference>
<dbReference type="GO" id="GO:0019843">
    <property type="term" value="F:rRNA binding"/>
    <property type="evidence" value="ECO:0007669"/>
    <property type="project" value="UniProtKB-UniRule"/>
</dbReference>
<dbReference type="GO" id="GO:0003735">
    <property type="term" value="F:structural constituent of ribosome"/>
    <property type="evidence" value="ECO:0007669"/>
    <property type="project" value="InterPro"/>
</dbReference>
<dbReference type="GO" id="GO:0008270">
    <property type="term" value="F:zinc ion binding"/>
    <property type="evidence" value="ECO:0007669"/>
    <property type="project" value="UniProtKB-UniRule"/>
</dbReference>
<dbReference type="GO" id="GO:0006412">
    <property type="term" value="P:translation"/>
    <property type="evidence" value="ECO:0007669"/>
    <property type="project" value="UniProtKB-UniRule"/>
</dbReference>
<dbReference type="FunFam" id="4.10.830.10:FF:000001">
    <property type="entry name" value="30S ribosomal protein S14 type Z"/>
    <property type="match status" value="1"/>
</dbReference>
<dbReference type="Gene3D" id="4.10.830.10">
    <property type="entry name" value="30s Ribosomal Protein S14, Chain N"/>
    <property type="match status" value="1"/>
</dbReference>
<dbReference type="HAMAP" id="MF_01364_B">
    <property type="entry name" value="Ribosomal_uS14_2_B"/>
    <property type="match status" value="1"/>
</dbReference>
<dbReference type="InterPro" id="IPR001209">
    <property type="entry name" value="Ribosomal_uS14"/>
</dbReference>
<dbReference type="InterPro" id="IPR023053">
    <property type="entry name" value="Ribosomal_uS14_bact"/>
</dbReference>
<dbReference type="InterPro" id="IPR018271">
    <property type="entry name" value="Ribosomal_uS14_CS"/>
</dbReference>
<dbReference type="InterPro" id="IPR043140">
    <property type="entry name" value="Ribosomal_uS14_sf"/>
</dbReference>
<dbReference type="NCBIfam" id="NF005974">
    <property type="entry name" value="PRK08061.1"/>
    <property type="match status" value="1"/>
</dbReference>
<dbReference type="PANTHER" id="PTHR19836">
    <property type="entry name" value="30S RIBOSOMAL PROTEIN S14"/>
    <property type="match status" value="1"/>
</dbReference>
<dbReference type="PANTHER" id="PTHR19836:SF26">
    <property type="entry name" value="SMALL RIBOSOMAL SUBUNIT PROTEIN US14B"/>
    <property type="match status" value="1"/>
</dbReference>
<dbReference type="Pfam" id="PF00253">
    <property type="entry name" value="Ribosomal_S14"/>
    <property type="match status" value="1"/>
</dbReference>
<dbReference type="SUPFAM" id="SSF57716">
    <property type="entry name" value="Glucocorticoid receptor-like (DNA-binding domain)"/>
    <property type="match status" value="1"/>
</dbReference>
<dbReference type="PROSITE" id="PS00527">
    <property type="entry name" value="RIBOSOMAL_S14"/>
    <property type="match status" value="1"/>
</dbReference>
<evidence type="ECO:0000255" key="1">
    <source>
        <dbReference type="HAMAP-Rule" id="MF_01364"/>
    </source>
</evidence>
<evidence type="ECO:0000305" key="2"/>
<reference key="1">
    <citation type="journal article" date="2006" name="J. Bacteriol.">
        <title>Pathogenomic sequence analysis of Bacillus cereus and Bacillus thuringiensis isolates closely related to Bacillus anthracis.</title>
        <authorList>
            <person name="Han C.S."/>
            <person name="Xie G."/>
            <person name="Challacombe J.F."/>
            <person name="Altherr M.R."/>
            <person name="Bhotika S.S."/>
            <person name="Bruce D."/>
            <person name="Campbell C.S."/>
            <person name="Campbell M.L."/>
            <person name="Chen J."/>
            <person name="Chertkov O."/>
            <person name="Cleland C."/>
            <person name="Dimitrijevic M."/>
            <person name="Doggett N.A."/>
            <person name="Fawcett J.J."/>
            <person name="Glavina T."/>
            <person name="Goodwin L.A."/>
            <person name="Hill K.K."/>
            <person name="Hitchcock P."/>
            <person name="Jackson P.J."/>
            <person name="Keim P."/>
            <person name="Kewalramani A.R."/>
            <person name="Longmire J."/>
            <person name="Lucas S."/>
            <person name="Malfatti S."/>
            <person name="McMurry K."/>
            <person name="Meincke L.J."/>
            <person name="Misra M."/>
            <person name="Moseman B.L."/>
            <person name="Mundt M."/>
            <person name="Munk A.C."/>
            <person name="Okinaka R.T."/>
            <person name="Parson-Quintana B."/>
            <person name="Reilly L.P."/>
            <person name="Richardson P."/>
            <person name="Robinson D.L."/>
            <person name="Rubin E."/>
            <person name="Saunders E."/>
            <person name="Tapia R."/>
            <person name="Tesmer J.G."/>
            <person name="Thayer N."/>
            <person name="Thompson L.S."/>
            <person name="Tice H."/>
            <person name="Ticknor L.O."/>
            <person name="Wills P.L."/>
            <person name="Brettin T.S."/>
            <person name="Gilna P."/>
        </authorList>
    </citation>
    <scope>NUCLEOTIDE SEQUENCE [LARGE SCALE GENOMIC DNA]</scope>
    <source>
        <strain>97-27</strain>
    </source>
</reference>
<organism>
    <name type="scientific">Bacillus thuringiensis subsp. konkukian (strain 97-27)</name>
    <dbReference type="NCBI Taxonomy" id="281309"/>
    <lineage>
        <taxon>Bacteria</taxon>
        <taxon>Bacillati</taxon>
        <taxon>Bacillota</taxon>
        <taxon>Bacilli</taxon>
        <taxon>Bacillales</taxon>
        <taxon>Bacillaceae</taxon>
        <taxon>Bacillus</taxon>
        <taxon>Bacillus cereus group</taxon>
    </lineage>
</organism>
<accession>Q6HPP5</accession>
<feature type="chain" id="PRO_0000269084" description="Small ribosomal subunit protein uS14">
    <location>
        <begin position="1"/>
        <end position="61"/>
    </location>
</feature>
<feature type="binding site" evidence="1">
    <location>
        <position position="24"/>
    </location>
    <ligand>
        <name>Zn(2+)</name>
        <dbReference type="ChEBI" id="CHEBI:29105"/>
    </ligand>
</feature>
<feature type="binding site" evidence="1">
    <location>
        <position position="27"/>
    </location>
    <ligand>
        <name>Zn(2+)</name>
        <dbReference type="ChEBI" id="CHEBI:29105"/>
    </ligand>
</feature>
<feature type="binding site" evidence="1">
    <location>
        <position position="40"/>
    </location>
    <ligand>
        <name>Zn(2+)</name>
        <dbReference type="ChEBI" id="CHEBI:29105"/>
    </ligand>
</feature>
<feature type="binding site" evidence="1">
    <location>
        <position position="43"/>
    </location>
    <ligand>
        <name>Zn(2+)</name>
        <dbReference type="ChEBI" id="CHEBI:29105"/>
    </ligand>
</feature>
<name>RS14Z_BACHK</name>
<comment type="function">
    <text evidence="1">Binds 16S rRNA, required for the assembly of 30S particles and may also be responsible for determining the conformation of the 16S rRNA at the A site.</text>
</comment>
<comment type="cofactor">
    <cofactor evidence="1">
        <name>Zn(2+)</name>
        <dbReference type="ChEBI" id="CHEBI:29105"/>
    </cofactor>
    <text evidence="1">Binds 1 zinc ion per subunit.</text>
</comment>
<comment type="subunit">
    <text evidence="1">Part of the 30S ribosomal subunit. Contacts proteins S3 and S10.</text>
</comment>
<comment type="similarity">
    <text evidence="1">Belongs to the universal ribosomal protein uS14 family. Zinc-binding uS14 subfamily.</text>
</comment>
<proteinExistence type="inferred from homology"/>
<sequence length="61" mass="7296">MAKKSMIAKQKRTPKFKVQEYTRCERCGRPHSVYRKFKLCRICFRELAYKGQIPGVKKASW</sequence>
<keyword id="KW-0479">Metal-binding</keyword>
<keyword id="KW-0687">Ribonucleoprotein</keyword>
<keyword id="KW-0689">Ribosomal protein</keyword>
<keyword id="KW-0694">RNA-binding</keyword>
<keyword id="KW-0699">rRNA-binding</keyword>
<keyword id="KW-0862">Zinc</keyword>
<protein>
    <recommendedName>
        <fullName evidence="1">Small ribosomal subunit protein uS14</fullName>
    </recommendedName>
    <alternativeName>
        <fullName evidence="2">30S ribosomal protein S14 type Z</fullName>
    </alternativeName>
</protein>